<feature type="chain" id="PRO_0000162849" description="Thiazole synthase">
    <location>
        <begin position="1"/>
        <end position="257"/>
    </location>
</feature>
<feature type="active site" description="Schiff-base intermediate with DXP" evidence="1">
    <location>
        <position position="96"/>
    </location>
</feature>
<feature type="binding site" evidence="1">
    <location>
        <position position="157"/>
    </location>
    <ligand>
        <name>1-deoxy-D-xylulose 5-phosphate</name>
        <dbReference type="ChEBI" id="CHEBI:57792"/>
    </ligand>
</feature>
<feature type="binding site" evidence="1">
    <location>
        <begin position="184"/>
        <end position="185"/>
    </location>
    <ligand>
        <name>1-deoxy-D-xylulose 5-phosphate</name>
        <dbReference type="ChEBI" id="CHEBI:57792"/>
    </ligand>
</feature>
<feature type="binding site" evidence="1">
    <location>
        <begin position="206"/>
        <end position="207"/>
    </location>
    <ligand>
        <name>1-deoxy-D-xylulose 5-phosphate</name>
        <dbReference type="ChEBI" id="CHEBI:57792"/>
    </ligand>
</feature>
<evidence type="ECO:0000255" key="1">
    <source>
        <dbReference type="HAMAP-Rule" id="MF_00443"/>
    </source>
</evidence>
<evidence type="ECO:0000305" key="2"/>
<protein>
    <recommendedName>
        <fullName evidence="1">Thiazole synthase</fullName>
        <ecNumber evidence="1">2.8.1.10</ecNumber>
    </recommendedName>
</protein>
<organism>
    <name type="scientific">Rhizobium etli (strain ATCC 51251 / DSM 11541 / JCM 21823 / NBRC 15573 / CFN 42)</name>
    <dbReference type="NCBI Taxonomy" id="347834"/>
    <lineage>
        <taxon>Bacteria</taxon>
        <taxon>Pseudomonadati</taxon>
        <taxon>Pseudomonadota</taxon>
        <taxon>Alphaproteobacteria</taxon>
        <taxon>Hyphomicrobiales</taxon>
        <taxon>Rhizobiaceae</taxon>
        <taxon>Rhizobium/Agrobacterium group</taxon>
        <taxon>Rhizobium</taxon>
    </lineage>
</organism>
<reference key="1">
    <citation type="journal article" date="1997" name="J. Bacteriol.">
        <title>Expression of thiamin biosynthetic genes (thiCOGE) and production of symbiotic terminal oxidase cbb3 in Rhizobium etli.</title>
        <authorList>
            <person name="Miranda-Rios J."/>
            <person name="Morera C."/>
            <person name="Taboada H."/>
            <person name="Davalos A."/>
            <person name="Encarnacion S."/>
            <person name="Mora J."/>
            <person name="Soberon M."/>
        </authorList>
    </citation>
    <scope>NUCLEOTIDE SEQUENCE [GENOMIC DNA]</scope>
    <source>
        <strain>CE3</strain>
    </source>
</reference>
<reference key="2">
    <citation type="journal article" date="2006" name="Proc. Natl. Acad. Sci. U.S.A.">
        <title>The partitioned Rhizobium etli genome: genetic and metabolic redundancy in seven interacting replicons.</title>
        <authorList>
            <person name="Gonzalez V."/>
            <person name="Santamaria R.I."/>
            <person name="Bustos P."/>
            <person name="Hernandez-Gonzalez I."/>
            <person name="Medrano-Soto A."/>
            <person name="Moreno-Hagelsieb G."/>
            <person name="Janga S.C."/>
            <person name="Ramirez M.A."/>
            <person name="Jimenez-Jacinto V."/>
            <person name="Collado-Vides J."/>
            <person name="Davila G."/>
        </authorList>
    </citation>
    <scope>NUCLEOTIDE SEQUENCE [LARGE SCALE GENOMIC DNA]</scope>
    <source>
        <strain>ATCC 51251 / DSM 11541 / JCM 21823 / NBRC 15573 / CFN 42</strain>
    </source>
</reference>
<dbReference type="EC" id="2.8.1.10" evidence="1"/>
<dbReference type="EMBL" id="AF004408">
    <property type="protein sequence ID" value="AAC45974.1"/>
    <property type="status" value="ALT_INIT"/>
    <property type="molecule type" value="Genomic_DNA"/>
</dbReference>
<dbReference type="EMBL" id="CP000135">
    <property type="protein sequence ID" value="ABC93122.1"/>
    <property type="molecule type" value="Genomic_DNA"/>
</dbReference>
<dbReference type="PIR" id="T44256">
    <property type="entry name" value="T44256"/>
</dbReference>
<dbReference type="RefSeq" id="WP_011427544.1">
    <property type="nucleotide sequence ID" value="NC_007763.1"/>
</dbReference>
<dbReference type="SMR" id="O34293"/>
<dbReference type="KEGG" id="ret:RHE_PB00080"/>
<dbReference type="HOGENOM" id="CLU_062233_1_0_5"/>
<dbReference type="OrthoDB" id="9805935at2"/>
<dbReference type="UniPathway" id="UPA00060"/>
<dbReference type="Proteomes" id="UP000001936">
    <property type="component" value="Plasmid p42b"/>
</dbReference>
<dbReference type="GO" id="GO:0005737">
    <property type="term" value="C:cytoplasm"/>
    <property type="evidence" value="ECO:0007669"/>
    <property type="project" value="UniProtKB-SubCell"/>
</dbReference>
<dbReference type="GO" id="GO:1990107">
    <property type="term" value="F:thiazole synthase activity"/>
    <property type="evidence" value="ECO:0007669"/>
    <property type="project" value="UniProtKB-EC"/>
</dbReference>
<dbReference type="GO" id="GO:0009229">
    <property type="term" value="P:thiamine diphosphate biosynthetic process"/>
    <property type="evidence" value="ECO:0007669"/>
    <property type="project" value="UniProtKB-UniRule"/>
</dbReference>
<dbReference type="CDD" id="cd04728">
    <property type="entry name" value="ThiG"/>
    <property type="match status" value="1"/>
</dbReference>
<dbReference type="Gene3D" id="3.20.20.70">
    <property type="entry name" value="Aldolase class I"/>
    <property type="match status" value="1"/>
</dbReference>
<dbReference type="HAMAP" id="MF_00443">
    <property type="entry name" value="ThiG"/>
    <property type="match status" value="1"/>
</dbReference>
<dbReference type="InterPro" id="IPR013785">
    <property type="entry name" value="Aldolase_TIM"/>
</dbReference>
<dbReference type="InterPro" id="IPR033983">
    <property type="entry name" value="Thiazole_synthase_ThiG"/>
</dbReference>
<dbReference type="InterPro" id="IPR008867">
    <property type="entry name" value="ThiG"/>
</dbReference>
<dbReference type="PANTHER" id="PTHR34266">
    <property type="entry name" value="THIAZOLE SYNTHASE"/>
    <property type="match status" value="1"/>
</dbReference>
<dbReference type="PANTHER" id="PTHR34266:SF2">
    <property type="entry name" value="THIAZOLE SYNTHASE"/>
    <property type="match status" value="1"/>
</dbReference>
<dbReference type="Pfam" id="PF05690">
    <property type="entry name" value="ThiG"/>
    <property type="match status" value="1"/>
</dbReference>
<dbReference type="SUPFAM" id="SSF110399">
    <property type="entry name" value="ThiG-like"/>
    <property type="match status" value="1"/>
</dbReference>
<name>THIG_RHIEC</name>
<accession>O34293</accession>
<accession>Q2K208</accession>
<keyword id="KW-0963">Cytoplasm</keyword>
<keyword id="KW-0614">Plasmid</keyword>
<keyword id="KW-1185">Reference proteome</keyword>
<keyword id="KW-0704">Schiff base</keyword>
<keyword id="KW-0784">Thiamine biosynthesis</keyword>
<keyword id="KW-0808">Transferase</keyword>
<proteinExistence type="inferred from homology"/>
<sequence length="257" mass="27179">MLKLYDVEVGSRLLLGTARYPSPAVLAEAVRRAKTEIVTVSLRREAAGGKAGGAFFELIRELGVRVLPNTAGCHSVQEAVLTAKLARDVFRTDWIKLEVIGHHDTLQPDVFGLVEAARILSGEGFQVFPYTTDDLVVAEKLLDAGCRVLMPWCAPIGSAMGPVNPMALRAFRAHFPDVPLIVDAGVGRPSHAAAVMEYGYDAVLLNTAVAGAGDPAAMAEAFALAIDAGRIAHSAVPLEPRDMAVPSTPVIGKAVFS</sequence>
<geneLocation type="plasmid">
    <name>p42b</name>
</geneLocation>
<gene>
    <name evidence="1" type="primary">thiG</name>
    <name type="ordered locus">RHE_PB00080</name>
</gene>
<comment type="function">
    <text evidence="1">Catalyzes the rearrangement of 1-deoxy-D-xylulose 5-phosphate (DXP) to produce the thiazole phosphate moiety of thiamine. Sulfur is provided by the thiocarboxylate moiety of the carrier protein ThiS. In vitro, sulfur can be provided by H(2)S.</text>
</comment>
<comment type="catalytic activity">
    <reaction evidence="1">
        <text>[ThiS sulfur-carrier protein]-C-terminal-Gly-aminoethanethioate + 2-iminoacetate + 1-deoxy-D-xylulose 5-phosphate = [ThiS sulfur-carrier protein]-C-terminal Gly-Gly + 2-[(2R,5Z)-2-carboxy-4-methylthiazol-5(2H)-ylidene]ethyl phosphate + 2 H2O + H(+)</text>
        <dbReference type="Rhea" id="RHEA:26297"/>
        <dbReference type="Rhea" id="RHEA-COMP:12909"/>
        <dbReference type="Rhea" id="RHEA-COMP:19908"/>
        <dbReference type="ChEBI" id="CHEBI:15377"/>
        <dbReference type="ChEBI" id="CHEBI:15378"/>
        <dbReference type="ChEBI" id="CHEBI:57792"/>
        <dbReference type="ChEBI" id="CHEBI:62899"/>
        <dbReference type="ChEBI" id="CHEBI:77846"/>
        <dbReference type="ChEBI" id="CHEBI:90778"/>
        <dbReference type="ChEBI" id="CHEBI:232372"/>
        <dbReference type="EC" id="2.8.1.10"/>
    </reaction>
</comment>
<comment type="pathway">
    <text evidence="1">Cofactor biosynthesis; thiamine diphosphate biosynthesis.</text>
</comment>
<comment type="subunit">
    <text evidence="1">Homotetramer. Forms heterodimers with either ThiH or ThiS.</text>
</comment>
<comment type="subcellular location">
    <subcellularLocation>
        <location evidence="1">Cytoplasm</location>
    </subcellularLocation>
</comment>
<comment type="similarity">
    <text evidence="1">Belongs to the ThiG family.</text>
</comment>
<comment type="sequence caution" evidence="2">
    <conflict type="erroneous initiation">
        <sequence resource="EMBL-CDS" id="AAC45974"/>
    </conflict>
</comment>